<organism>
    <name type="scientific">Canis lupus familiaris</name>
    <name type="common">Dog</name>
    <name type="synonym">Canis familiaris</name>
    <dbReference type="NCBI Taxonomy" id="9615"/>
    <lineage>
        <taxon>Eukaryota</taxon>
        <taxon>Metazoa</taxon>
        <taxon>Chordata</taxon>
        <taxon>Craniata</taxon>
        <taxon>Vertebrata</taxon>
        <taxon>Euteleostomi</taxon>
        <taxon>Mammalia</taxon>
        <taxon>Eutheria</taxon>
        <taxon>Laurasiatheria</taxon>
        <taxon>Carnivora</taxon>
        <taxon>Caniformia</taxon>
        <taxon>Canidae</taxon>
        <taxon>Canis</taxon>
    </lineage>
</organism>
<accession>P39881</accession>
<protein>
    <recommendedName>
        <fullName evidence="9">Homeobox protein cut-like 1</fullName>
    </recommendedName>
    <alternativeName>
        <fullName>CCAAT displacement protein</fullName>
        <shortName>CDP</shortName>
    </alternativeName>
    <alternativeName>
        <fullName>Clox-1</fullName>
    </alternativeName>
    <alternativeName>
        <fullName>Homeobox protein Clox</fullName>
    </alternativeName>
    <alternativeName>
        <fullName>Homeobox protein cux-1</fullName>
    </alternativeName>
    <component>
        <recommendedName>
            <fullName evidence="2">CDP/Cux p110</fullName>
        </recommendedName>
    </component>
</protein>
<reference key="1">
    <citation type="journal article" date="1992" name="Development">
        <title>Clox, a mammalian homeobox gene related to Drosophila cut, encodes DNA-binding regulatory proteins differentially expressed during development.</title>
        <authorList>
            <person name="Andres V."/>
            <person name="Nadal-Ginard B."/>
            <person name="Mahdavi V."/>
        </authorList>
    </citation>
    <scope>NUCLEOTIDE SEQUENCE [MRNA]</scope>
    <source>
        <tissue>Heart ventricle</tissue>
    </source>
</reference>
<gene>
    <name type="primary">CUX1</name>
    <name type="synonym">CLOX</name>
    <name type="synonym">CUTL1</name>
</gene>
<dbReference type="EMBL" id="X69017">
    <property type="protein sequence ID" value="CAA48782.1"/>
    <property type="molecule type" value="mRNA"/>
</dbReference>
<dbReference type="PIR" id="S33121">
    <property type="entry name" value="S33121"/>
</dbReference>
<dbReference type="SMR" id="P39881"/>
<dbReference type="FunCoup" id="P39881">
    <property type="interactions" value="381"/>
</dbReference>
<dbReference type="STRING" id="9615.ENSCAFP00000062672"/>
<dbReference type="InParanoid" id="P39881"/>
<dbReference type="OrthoDB" id="10257567at2759"/>
<dbReference type="Proteomes" id="UP000002254">
    <property type="component" value="Unplaced"/>
</dbReference>
<dbReference type="Proteomes" id="UP000694429">
    <property type="component" value="Unplaced"/>
</dbReference>
<dbReference type="Proteomes" id="UP000694542">
    <property type="component" value="Unplaced"/>
</dbReference>
<dbReference type="Proteomes" id="UP000805418">
    <property type="component" value="Unplaced"/>
</dbReference>
<dbReference type="GO" id="GO:0005634">
    <property type="term" value="C:nucleus"/>
    <property type="evidence" value="ECO:0007669"/>
    <property type="project" value="UniProtKB-SubCell"/>
</dbReference>
<dbReference type="GO" id="GO:0003677">
    <property type="term" value="F:DNA binding"/>
    <property type="evidence" value="ECO:0007669"/>
    <property type="project" value="UniProtKB-KW"/>
</dbReference>
<dbReference type="GO" id="GO:0000981">
    <property type="term" value="F:DNA-binding transcription factor activity, RNA polymerase II-specific"/>
    <property type="evidence" value="ECO:0007669"/>
    <property type="project" value="InterPro"/>
</dbReference>
<dbReference type="CDD" id="cd00086">
    <property type="entry name" value="homeodomain"/>
    <property type="match status" value="1"/>
</dbReference>
<dbReference type="FunFam" id="1.10.260.40:FF:000004">
    <property type="entry name" value="Cut-like homeobox 1a"/>
    <property type="match status" value="2"/>
</dbReference>
<dbReference type="FunFam" id="1.10.260.40:FF:000010">
    <property type="entry name" value="Cut-like homeobox 1a"/>
    <property type="match status" value="1"/>
</dbReference>
<dbReference type="FunFam" id="1.10.10.60:FF:000116">
    <property type="entry name" value="Cut-like homeobox 2b"/>
    <property type="match status" value="1"/>
</dbReference>
<dbReference type="Gene3D" id="1.10.10.60">
    <property type="entry name" value="Homeodomain-like"/>
    <property type="match status" value="1"/>
</dbReference>
<dbReference type="Gene3D" id="1.10.260.40">
    <property type="entry name" value="lambda repressor-like DNA-binding domains"/>
    <property type="match status" value="3"/>
</dbReference>
<dbReference type="InterPro" id="IPR003350">
    <property type="entry name" value="CUT_dom"/>
</dbReference>
<dbReference type="InterPro" id="IPR001356">
    <property type="entry name" value="HD"/>
</dbReference>
<dbReference type="InterPro" id="IPR017970">
    <property type="entry name" value="Homeobox_CS"/>
</dbReference>
<dbReference type="InterPro" id="IPR009057">
    <property type="entry name" value="Homeodomain-like_sf"/>
</dbReference>
<dbReference type="InterPro" id="IPR010982">
    <property type="entry name" value="Lambda_DNA-bd_dom_sf"/>
</dbReference>
<dbReference type="PANTHER" id="PTHR14043">
    <property type="entry name" value="CCAAT DISPLACEMENT PROTEIN-RELATED"/>
    <property type="match status" value="1"/>
</dbReference>
<dbReference type="PANTHER" id="PTHR14043:SF4">
    <property type="entry name" value="HOMEOBOX PROTEIN CUT-LIKE 1"/>
    <property type="match status" value="1"/>
</dbReference>
<dbReference type="Pfam" id="PF02376">
    <property type="entry name" value="CUT"/>
    <property type="match status" value="3"/>
</dbReference>
<dbReference type="Pfam" id="PF00046">
    <property type="entry name" value="Homeodomain"/>
    <property type="match status" value="1"/>
</dbReference>
<dbReference type="SMART" id="SM01109">
    <property type="entry name" value="CUT"/>
    <property type="match status" value="3"/>
</dbReference>
<dbReference type="SMART" id="SM00389">
    <property type="entry name" value="HOX"/>
    <property type="match status" value="1"/>
</dbReference>
<dbReference type="SUPFAM" id="SSF46689">
    <property type="entry name" value="Homeodomain-like"/>
    <property type="match status" value="1"/>
</dbReference>
<dbReference type="SUPFAM" id="SSF47413">
    <property type="entry name" value="lambda repressor-like DNA-binding domains"/>
    <property type="match status" value="3"/>
</dbReference>
<dbReference type="PROSITE" id="PS51042">
    <property type="entry name" value="CUT"/>
    <property type="match status" value="3"/>
</dbReference>
<dbReference type="PROSITE" id="PS00027">
    <property type="entry name" value="HOMEOBOX_1"/>
    <property type="match status" value="1"/>
</dbReference>
<dbReference type="PROSITE" id="PS50071">
    <property type="entry name" value="HOMEOBOX_2"/>
    <property type="match status" value="1"/>
</dbReference>
<comment type="function">
    <text evidence="3">Transcription factor involved in the control of neuronal differentiation in the brain. Regulates dendrite development and branching, and dendritic spine formation in cortical layers II-III. Also involved in the control of synaptogenesis. In addition, it has probably a broad role in mammalian development as a repressor of developmentally regulated gene expression. May act by preventing binding of positively-activing CCAAT factors to promoters. Component of nf-munr repressor; binds to the matrix attachment regions (MARs) (5' and 3') of the immunoglobulin heavy chain enhancer. Represses T-cell receptor (TCR) beta enhancer function by binding to MARbeta, an ATC-rich DNA sequence located upstream of the TCR beta enhancer. Binds to the TH enhancer; may require the basic helix-loop-helix protein TCF4 as a coactivator.</text>
</comment>
<comment type="function">
    <molecule>CDP/Cux p110</molecule>
    <text evidence="2">Plays a role in cell cycle progression, in particular at the G1/S transition. As cells progress into S phase, a fraction of CUX1 molecules is proteolytically processed into N-terminally truncated proteins of 110 kDa. While CUX1 only transiently binds to DNA and carries the CCAAT-displacement activity, CDP/Cux p110 makes a stable interaction with DNA and stimulates expression of genes such as POLA1.</text>
</comment>
<comment type="subunit">
    <text evidence="1">Interacts with BANP.</text>
</comment>
<comment type="subcellular location">
    <subcellularLocation>
        <location>Nucleus</location>
    </subcellularLocation>
</comment>
<comment type="alternative products">
    <event type="alternative splicing"/>
    <isoform>
        <id>P39881-1</id>
        <name>1</name>
        <sequence type="displayed"/>
    </isoform>
    <text>A number of isoforms may be produced.</text>
</comment>
<comment type="tissue specificity">
    <text>A broad pattern of expression observed in tissues of diverse origins, such as cartilage, liver, brain, lung, heart and skeletal muscle. There are 2 distinct protein species: the larger one (230-250 kDa) is found mainly in adult brain, lung and heart, and the smaller one (180-190 kDa) predominates in early embryonic tissues.</text>
</comment>
<comment type="developmental stage">
    <text>Differentially expressed during development. Small protein species predominate in early embryos and are up-regulated in committed myoblasts and chondrocytes, but down-regulated upon terminal differentiation. Large species are detected mainly in adult tissues and terminally differentiated cells.</text>
</comment>
<comment type="PTM">
    <text evidence="2">As cells progress into S phase, a fraction of CUX1 molecules is proteolytically processed into N-terminally truncated proteins of 110 kDa by CTSL. Cell cycle-dependent processing of CUX1 serves to generate a CDP/Cux p110 with distinct DNA binding and transcriptional properties.</text>
</comment>
<comment type="PTM">
    <text evidence="4">Phosphorylated by PKA.</text>
</comment>
<comment type="miscellaneous">
    <text>Asn-730 may participate in regulating DNA-binding activity by promoting homo- and heterodimerization.</text>
</comment>
<comment type="similarity">
    <text evidence="9">Belongs to the CUT homeobox family.</text>
</comment>
<evidence type="ECO:0000250" key="1"/>
<evidence type="ECO:0000250" key="2">
    <source>
        <dbReference type="UniProtKB" id="P39880"/>
    </source>
</evidence>
<evidence type="ECO:0000250" key="3">
    <source>
        <dbReference type="UniProtKB" id="P53564"/>
    </source>
</evidence>
<evidence type="ECO:0000250" key="4">
    <source>
        <dbReference type="UniProtKB" id="P53565"/>
    </source>
</evidence>
<evidence type="ECO:0000255" key="5"/>
<evidence type="ECO:0000255" key="6">
    <source>
        <dbReference type="PROSITE-ProRule" id="PRU00108"/>
    </source>
</evidence>
<evidence type="ECO:0000255" key="7">
    <source>
        <dbReference type="PROSITE-ProRule" id="PRU00374"/>
    </source>
</evidence>
<evidence type="ECO:0000256" key="8">
    <source>
        <dbReference type="SAM" id="MobiDB-lite"/>
    </source>
</evidence>
<evidence type="ECO:0000305" key="9"/>
<keyword id="KW-0025">Alternative splicing</keyword>
<keyword id="KW-0175">Coiled coil</keyword>
<keyword id="KW-0217">Developmental protein</keyword>
<keyword id="KW-0238">DNA-binding</keyword>
<keyword id="KW-0371">Homeobox</keyword>
<keyword id="KW-1017">Isopeptide bond</keyword>
<keyword id="KW-0539">Nucleus</keyword>
<keyword id="KW-0597">Phosphoprotein</keyword>
<keyword id="KW-1185">Reference proteome</keyword>
<keyword id="KW-0677">Repeat</keyword>
<keyword id="KW-0678">Repressor</keyword>
<keyword id="KW-0804">Transcription</keyword>
<keyword id="KW-0805">Transcription regulation</keyword>
<keyword id="KW-0832">Ubl conjugation</keyword>
<sequence>SRQVKEQLIKHNIGQRIFGHYVLGLSQGSVSEILARPKPWNKLTVRGKEPFHKMKQFLSDEQNILALRSIQGRQRENPGQSLNRLFQEVPKRRNGSEGNITTRIRASETGSDEAIKSILEQAKRELQVQKTAEPAQPSSTSSSGTSDDAIRSILQQARREMEAQQAALDPALKPAPLSQADLAILSPKLIPSSPMSSVSSYPPLALSLKKPPTAPDTSASTLPNPPALKKESQDAPGLDLPGAAESAQGVLRHVKSELGRSGVWKDHWWSTVQPERKSAAPPEDAKSEEAGGTKEKGGGQGHGPIAASSRDPHHRRSTGRNGPALSPRTPQSSELSLTGASRSETPQNSPLPSSPIVPMSKPAKPSVPPLTPEQYEIYMYQEVDTIELTRQVKEKLAKNGICQRIFGEKVLGLSQGSVSDMLSRPKPWSKLTQKGREPFIRMQLWLNGELGQGVLPVQGQQQGPVLHSVTSLQDPLQQGCVSSESTPKTSASCSPAPESPMSSSESVKSLTELVQQPCPPIETSKDGKPPEPSDPPASDSQPATPLPLSGHSALSIQELVAMSPELDTYGITKRVKEVLTDNNLGQRLFGETILGLTQGSVSDLLSRPKPWHKLSLKGREPFVRMQLWLNDPNNVEKLMDMKRMEKKAYMKRRHSSVSDSQPCEPPSVGIDYSQGASPQPQHQLKKPRVVLAPEEKEALKRAYQQKPYPSPKTIEELATQLNLKTSTVINWFHNYRSRIRRELFIEEIQAGSQGQAGARHSPSARSSGAAPSSEGDSCDGVEAAEGPGAADAEESAPAAAAKSQGGPAEAAVAPEEREEAPRPAEKRSRRPRGPGPGPGRRGGGGPAPGAPAAPAAAARGPSRRPGARAKPRRRRRRRRRHARGGGRRYLSRPARGGPCRARDGAHRSSALPSTSAPAAARRPSSLQSLFGLPEAAGARDSRDNPLRKKKAANLNSIIHRLEKAASREEPIEWEF</sequence>
<feature type="chain" id="PRO_0000202392" description="Homeobox protein cut-like 1">
    <location>
        <begin position="1" status="less than"/>
        <end position="975"/>
    </location>
</feature>
<feature type="chain" id="PRO_0000450796" description="CDP/Cux p110" evidence="2">
    <location>
        <begin position="200"/>
        <end position="975"/>
    </location>
</feature>
<feature type="DNA-binding region" description="CUT 1" evidence="7">
    <location>
        <begin position="1" status="less than"/>
        <end position="73"/>
    </location>
</feature>
<feature type="DNA-binding region" description="CUT 2" evidence="7">
    <location>
        <begin position="374"/>
        <end position="461"/>
    </location>
</feature>
<feature type="DNA-binding region" description="CUT 3" evidence="7">
    <location>
        <begin position="557"/>
        <end position="644"/>
    </location>
</feature>
<feature type="DNA-binding region" description="Homeobox" evidence="6">
    <location>
        <begin position="684"/>
        <end position="743"/>
    </location>
</feature>
<feature type="region of interest" description="Disordered" evidence="8">
    <location>
        <begin position="90"/>
        <end position="113"/>
    </location>
</feature>
<feature type="region of interest" description="Disordered" evidence="8">
    <location>
        <begin position="126"/>
        <end position="148"/>
    </location>
</feature>
<feature type="region of interest" description="Disordered" evidence="8">
    <location>
        <begin position="209"/>
        <end position="246"/>
    </location>
</feature>
<feature type="region of interest" description="Disordered" evidence="8">
    <location>
        <begin position="262"/>
        <end position="369"/>
    </location>
</feature>
<feature type="region of interest" description="Disordered" evidence="8">
    <location>
        <begin position="476"/>
        <end position="549"/>
    </location>
</feature>
<feature type="region of interest" description="Disordered" evidence="8">
    <location>
        <begin position="652"/>
        <end position="687"/>
    </location>
</feature>
<feature type="region of interest" description="Disordered" evidence="8">
    <location>
        <begin position="752"/>
        <end position="949"/>
    </location>
</feature>
<feature type="coiled-coil region" evidence="5">
    <location>
        <begin position="113"/>
        <end position="169"/>
    </location>
</feature>
<feature type="compositionally biased region" description="Basic and acidic residues" evidence="8">
    <location>
        <begin position="262"/>
        <end position="297"/>
    </location>
</feature>
<feature type="compositionally biased region" description="Polar residues" evidence="8">
    <location>
        <begin position="328"/>
        <end position="351"/>
    </location>
</feature>
<feature type="compositionally biased region" description="Polar residues" evidence="8">
    <location>
        <begin position="476"/>
        <end position="489"/>
    </location>
</feature>
<feature type="compositionally biased region" description="Low complexity" evidence="8">
    <location>
        <begin position="490"/>
        <end position="506"/>
    </location>
</feature>
<feature type="compositionally biased region" description="Low complexity" evidence="8">
    <location>
        <begin position="756"/>
        <end position="773"/>
    </location>
</feature>
<feature type="compositionally biased region" description="Low complexity" evidence="8">
    <location>
        <begin position="780"/>
        <end position="813"/>
    </location>
</feature>
<feature type="compositionally biased region" description="Gly residues" evidence="8">
    <location>
        <begin position="838"/>
        <end position="847"/>
    </location>
</feature>
<feature type="compositionally biased region" description="Low complexity" evidence="8">
    <location>
        <begin position="850"/>
        <end position="860"/>
    </location>
</feature>
<feature type="compositionally biased region" description="Basic residues" evidence="8">
    <location>
        <begin position="861"/>
        <end position="890"/>
    </location>
</feature>
<feature type="compositionally biased region" description="Low complexity" evidence="8">
    <location>
        <begin position="907"/>
        <end position="929"/>
    </location>
</feature>
<feature type="compositionally biased region" description="Basic and acidic residues" evidence="8">
    <location>
        <begin position="937"/>
        <end position="946"/>
    </location>
</feature>
<feature type="site" description="Cleavage; by CTSL" evidence="2">
    <location>
        <begin position="87"/>
        <end position="88"/>
    </location>
</feature>
<feature type="site" description="Cleavage; by CTSL" evidence="2">
    <location>
        <begin position="191"/>
        <end position="199"/>
    </location>
</feature>
<feature type="modified residue" description="Phosphoserine" evidence="2">
    <location>
        <position position="207"/>
    </location>
</feature>
<feature type="modified residue" description="Phosphoserine" evidence="4">
    <location>
        <position position="349"/>
    </location>
</feature>
<feature type="modified residue" description="Phosphoserine" evidence="2">
    <location>
        <position position="499"/>
    </location>
</feature>
<feature type="modified residue" description="Phosphoserine" evidence="4">
    <location>
        <position position="509"/>
    </location>
</feature>
<feature type="modified residue" description="Phosphoserine" evidence="2">
    <location>
        <position position="710"/>
    </location>
</feature>
<feature type="modified residue" description="Phosphoserine" evidence="3">
    <location>
        <position position="777"/>
    </location>
</feature>
<feature type="modified residue" description="Phosphoserine" evidence="2">
    <location>
        <position position="925"/>
    </location>
</feature>
<feature type="modified residue" description="Phosphoserine" evidence="2">
    <location>
        <position position="956"/>
    </location>
</feature>
<feature type="modified residue" description="Phosphoserine" evidence="3">
    <location>
        <position position="966"/>
    </location>
</feature>
<feature type="cross-link" description="Glycyl lysine isopeptide (Lys-Gly) (interchain with G-Cter in SUMO2)" evidence="2">
    <location>
        <position position="229"/>
    </location>
</feature>
<feature type="cross-link" description="Glycyl lysine isopeptide (Lys-Gly) (interchain with G-Cter in SUMO2)" evidence="2">
    <location>
        <position position="255"/>
    </location>
</feature>
<feature type="cross-link" description="Glycyl lysine isopeptide (Lys-Gly) (interchain with G-Cter in SUMO2)" evidence="2">
    <location>
        <position position="286"/>
    </location>
</feature>
<feature type="cross-link" description="Glycyl lysine isopeptide (Lys-Gly) (interchain with G-Cter in SUMO2)" evidence="2">
    <location>
        <position position="724"/>
    </location>
</feature>
<feature type="non-terminal residue">
    <location>
        <position position="1"/>
    </location>
</feature>
<name>CUX1_CANLF</name>
<proteinExistence type="evidence at transcript level"/>